<dbReference type="EC" id="4.2.2.n1" evidence="1"/>
<dbReference type="EMBL" id="AP008232">
    <property type="protein sequence ID" value="BAE75054.1"/>
    <property type="molecule type" value="Genomic_DNA"/>
</dbReference>
<dbReference type="RefSeq" id="WP_011411603.1">
    <property type="nucleotide sequence ID" value="NC_007712.1"/>
</dbReference>
<dbReference type="SMR" id="Q2NS21"/>
<dbReference type="STRING" id="343509.SG1779"/>
<dbReference type="CAZy" id="GH23">
    <property type="family name" value="Glycoside Hydrolase Family 23"/>
</dbReference>
<dbReference type="KEGG" id="sgl:SG1779"/>
<dbReference type="eggNOG" id="COG4623">
    <property type="taxonomic scope" value="Bacteria"/>
</dbReference>
<dbReference type="HOGENOM" id="CLU_027494_0_1_6"/>
<dbReference type="OrthoDB" id="9815002at2"/>
<dbReference type="BioCyc" id="SGLO343509:SGP1_RS16155-MONOMER"/>
<dbReference type="Proteomes" id="UP000001932">
    <property type="component" value="Chromosome"/>
</dbReference>
<dbReference type="GO" id="GO:0009279">
    <property type="term" value="C:cell outer membrane"/>
    <property type="evidence" value="ECO:0007669"/>
    <property type="project" value="UniProtKB-SubCell"/>
</dbReference>
<dbReference type="GO" id="GO:0008933">
    <property type="term" value="F:peptidoglycan lytic transglycosylase activity"/>
    <property type="evidence" value="ECO:0007669"/>
    <property type="project" value="UniProtKB-UniRule"/>
</dbReference>
<dbReference type="GO" id="GO:0016998">
    <property type="term" value="P:cell wall macromolecule catabolic process"/>
    <property type="evidence" value="ECO:0007669"/>
    <property type="project" value="UniProtKB-UniRule"/>
</dbReference>
<dbReference type="GO" id="GO:0071555">
    <property type="term" value="P:cell wall organization"/>
    <property type="evidence" value="ECO:0007669"/>
    <property type="project" value="UniProtKB-KW"/>
</dbReference>
<dbReference type="GO" id="GO:0009253">
    <property type="term" value="P:peptidoglycan catabolic process"/>
    <property type="evidence" value="ECO:0007669"/>
    <property type="project" value="TreeGrafter"/>
</dbReference>
<dbReference type="CDD" id="cd13403">
    <property type="entry name" value="MLTF-like"/>
    <property type="match status" value="1"/>
</dbReference>
<dbReference type="CDD" id="cd01009">
    <property type="entry name" value="PBP2_YfhD_N"/>
    <property type="match status" value="1"/>
</dbReference>
<dbReference type="FunFam" id="1.10.530.10:FF:000003">
    <property type="entry name" value="Membrane-bound lytic murein transglycosylase F"/>
    <property type="match status" value="1"/>
</dbReference>
<dbReference type="Gene3D" id="1.10.530.10">
    <property type="match status" value="1"/>
</dbReference>
<dbReference type="Gene3D" id="3.40.190.10">
    <property type="entry name" value="Periplasmic binding protein-like II"/>
    <property type="match status" value="2"/>
</dbReference>
<dbReference type="HAMAP" id="MF_02016">
    <property type="entry name" value="MltF"/>
    <property type="match status" value="1"/>
</dbReference>
<dbReference type="InterPro" id="IPR023346">
    <property type="entry name" value="Lysozyme-like_dom_sf"/>
</dbReference>
<dbReference type="InterPro" id="IPR023703">
    <property type="entry name" value="MltF"/>
</dbReference>
<dbReference type="InterPro" id="IPR001638">
    <property type="entry name" value="Solute-binding_3/MltF_N"/>
</dbReference>
<dbReference type="InterPro" id="IPR000189">
    <property type="entry name" value="Transglyc_AS"/>
</dbReference>
<dbReference type="InterPro" id="IPR008258">
    <property type="entry name" value="Transglycosylase_SLT_dom_1"/>
</dbReference>
<dbReference type="NCBIfam" id="NF008112">
    <property type="entry name" value="PRK10859.1"/>
    <property type="match status" value="1"/>
</dbReference>
<dbReference type="PANTHER" id="PTHR35936">
    <property type="entry name" value="MEMBRANE-BOUND LYTIC MUREIN TRANSGLYCOSYLASE F"/>
    <property type="match status" value="1"/>
</dbReference>
<dbReference type="PANTHER" id="PTHR35936:SF32">
    <property type="entry name" value="MEMBRANE-BOUND LYTIC MUREIN TRANSGLYCOSYLASE F"/>
    <property type="match status" value="1"/>
</dbReference>
<dbReference type="Pfam" id="PF00497">
    <property type="entry name" value="SBP_bac_3"/>
    <property type="match status" value="1"/>
</dbReference>
<dbReference type="Pfam" id="PF01464">
    <property type="entry name" value="SLT"/>
    <property type="match status" value="1"/>
</dbReference>
<dbReference type="SMART" id="SM00062">
    <property type="entry name" value="PBPb"/>
    <property type="match status" value="1"/>
</dbReference>
<dbReference type="SUPFAM" id="SSF53955">
    <property type="entry name" value="Lysozyme-like"/>
    <property type="match status" value="1"/>
</dbReference>
<dbReference type="SUPFAM" id="SSF53850">
    <property type="entry name" value="Periplasmic binding protein-like II"/>
    <property type="match status" value="1"/>
</dbReference>
<dbReference type="PROSITE" id="PS00922">
    <property type="entry name" value="TRANSGLYCOSYLASE"/>
    <property type="match status" value="1"/>
</dbReference>
<reference key="1">
    <citation type="journal article" date="2006" name="Genome Res.">
        <title>Massive genome erosion and functional adaptations provide insights into the symbiotic lifestyle of Sodalis glossinidius in the tsetse host.</title>
        <authorList>
            <person name="Toh H."/>
            <person name="Weiss B.L."/>
            <person name="Perkin S.A.H."/>
            <person name="Yamashita A."/>
            <person name="Oshima K."/>
            <person name="Hattori M."/>
            <person name="Aksoy S."/>
        </authorList>
    </citation>
    <scope>NUCLEOTIDE SEQUENCE [LARGE SCALE GENOMIC DNA]</scope>
    <source>
        <strain>morsitans</strain>
    </source>
</reference>
<keyword id="KW-0998">Cell outer membrane</keyword>
<keyword id="KW-0961">Cell wall biogenesis/degradation</keyword>
<keyword id="KW-0456">Lyase</keyword>
<keyword id="KW-0472">Membrane</keyword>
<keyword id="KW-0677">Repeat</keyword>
<keyword id="KW-0732">Signal</keyword>
<name>MLTF_SODGM</name>
<comment type="function">
    <text evidence="1">Murein-degrading enzyme that degrades murein glycan strands and insoluble, high-molecular weight murein sacculi, with the concomitant formation of a 1,6-anhydromuramoyl product. Lytic transglycosylases (LTs) play an integral role in the metabolism of the peptidoglycan (PG) sacculus. Their lytic action creates space within the PG sacculus to allow for its expansion as well as for the insertion of various structures such as secretion systems and flagella.</text>
</comment>
<comment type="catalytic activity">
    <reaction evidence="1">
        <text>Exolytic cleavage of the (1-&gt;4)-beta-glycosidic linkage between N-acetylmuramic acid (MurNAc) and N-acetylglucosamine (GlcNAc) residues in peptidoglycan, from either the reducing or the non-reducing ends of the peptidoglycan chains, with concomitant formation of a 1,6-anhydrobond in the MurNAc residue.</text>
        <dbReference type="EC" id="4.2.2.n1"/>
    </reaction>
</comment>
<comment type="subcellular location">
    <subcellularLocation>
        <location>Cell outer membrane</location>
        <topology>Peripheral membrane protein</topology>
    </subcellularLocation>
    <text evidence="1">Attached to the inner leaflet of the outer membrane.</text>
</comment>
<comment type="domain">
    <text evidence="1">The N-terminal domain does not have lytic activity and probably modulates enzymatic activity. The C-terminal domain is the catalytic active domain.</text>
</comment>
<comment type="similarity">
    <text evidence="1">In the N-terminal section; belongs to the bacterial solute-binding protein 3 family.</text>
</comment>
<comment type="similarity">
    <text evidence="1">In the C-terminal section; belongs to the transglycosylase Slt family.</text>
</comment>
<organism>
    <name type="scientific">Sodalis glossinidius (strain morsitans)</name>
    <dbReference type="NCBI Taxonomy" id="343509"/>
    <lineage>
        <taxon>Bacteria</taxon>
        <taxon>Pseudomonadati</taxon>
        <taxon>Pseudomonadota</taxon>
        <taxon>Gammaproteobacteria</taxon>
        <taxon>Enterobacterales</taxon>
        <taxon>Bruguierivoracaceae</taxon>
        <taxon>Sodalis</taxon>
    </lineage>
</organism>
<proteinExistence type="inferred from homology"/>
<gene>
    <name evidence="1" type="primary">mltF</name>
    <name type="ordered locus">SG1779</name>
</gene>
<feature type="signal peptide" evidence="1">
    <location>
        <begin position="1"/>
        <end position="24"/>
    </location>
</feature>
<feature type="chain" id="PRO_0000353987" description="Membrane-bound lytic murein transglycosylase F">
    <location>
        <begin position="25"/>
        <end position="466"/>
    </location>
</feature>
<feature type="region of interest" description="Non-LT domain" evidence="1">
    <location>
        <begin position="25"/>
        <end position="268"/>
    </location>
</feature>
<feature type="region of interest" description="LT domain" evidence="1">
    <location>
        <begin position="269"/>
        <end position="466"/>
    </location>
</feature>
<feature type="active site" evidence="1">
    <location>
        <position position="313"/>
    </location>
</feature>
<accession>Q2NS21</accession>
<evidence type="ECO:0000255" key="1">
    <source>
        <dbReference type="HAMAP-Rule" id="MF_02016"/>
    </source>
</evidence>
<sequence length="466" mass="52769">MKRFKLNYFIIGLIAILLTWSLWTTVPWRNAHQDNLAAIKARGELRISTLDAPLSYYSVNNQPSGFDYDLAQRFADYLGVTLKVRVRSNLNQLFDDLENDNADILAASLIYNAERLNRFTVGPSYYSVSQQLVYRLGQPRPKNLGDLRGRLAVASGSAQITQLRQLKKKQYPQLAWEVSSDLSSRSLLEKVADGKLDYTLADSASVGLLQRVHPQLAVAFDITEEKPVTWYLRRSDSEGLSAALLDFFSQLNDNGIMARLEEKYLGHVGGFDYVDTKTFLNAIDATLPALQPLFERYAHDIDWKLLAAISYQESHWDPLATSATGVRGLMMLTRPTADSLGIGDRTNAEQSVRGGALYLSRMMQRLPDTIPEDEKIWFALAAYNMGYAHMLDARALTAKQQGNADSWVDVKLRLPMLSQPRYYKQTLYGYARGQQAYNYVENIRRYEISLVGYLQEKEKKAAQLAD</sequence>
<protein>
    <recommendedName>
        <fullName evidence="1">Membrane-bound lytic murein transglycosylase F</fullName>
        <ecNumber evidence="1">4.2.2.n1</ecNumber>
    </recommendedName>
    <alternativeName>
        <fullName evidence="1">Murein lyase F</fullName>
    </alternativeName>
</protein>